<feature type="chain" id="PRO_0000283195" description="F-box/kelch-repeat protein At2g24250">
    <location>
        <begin position="1"/>
        <end position="374"/>
    </location>
</feature>
<feature type="domain" description="F-box">
    <location>
        <begin position="14"/>
        <end position="63"/>
    </location>
</feature>
<feature type="repeat" description="Kelch 1">
    <location>
        <begin position="100"/>
        <end position="150"/>
    </location>
</feature>
<feature type="repeat" description="Kelch 2">
    <location>
        <begin position="249"/>
        <end position="301"/>
    </location>
</feature>
<keyword id="KW-0880">Kelch repeat</keyword>
<keyword id="KW-1185">Reference proteome</keyword>
<keyword id="KW-0677">Repeat</keyword>
<proteinExistence type="evidence at transcript level"/>
<gene>
    <name type="ordered locus">At2g24250</name>
    <name type="ORF">F27D4.23</name>
</gene>
<dbReference type="EMBL" id="AC005967">
    <property type="protein sequence ID" value="AAD03386.2"/>
    <property type="molecule type" value="Genomic_DNA"/>
</dbReference>
<dbReference type="EMBL" id="CP002685">
    <property type="protein sequence ID" value="AEC07548.1"/>
    <property type="molecule type" value="Genomic_DNA"/>
</dbReference>
<dbReference type="EMBL" id="CP002685">
    <property type="protein sequence ID" value="AEC07549.1"/>
    <property type="molecule type" value="Genomic_DNA"/>
</dbReference>
<dbReference type="EMBL" id="AY037201">
    <property type="protein sequence ID" value="AAK59786.1"/>
    <property type="molecule type" value="mRNA"/>
</dbReference>
<dbReference type="EMBL" id="BT003033">
    <property type="protein sequence ID" value="AAO23598.1"/>
    <property type="molecule type" value="mRNA"/>
</dbReference>
<dbReference type="PIR" id="D84634">
    <property type="entry name" value="D84634"/>
</dbReference>
<dbReference type="RefSeq" id="NP_001031407.1">
    <property type="nucleotide sequence ID" value="NM_001036330.2"/>
</dbReference>
<dbReference type="RefSeq" id="NP_565565.1">
    <property type="nucleotide sequence ID" value="NM_127986.2"/>
</dbReference>
<dbReference type="BioGRID" id="2311">
    <property type="interactions" value="6"/>
</dbReference>
<dbReference type="FunCoup" id="Q9ZUH0">
    <property type="interactions" value="5"/>
</dbReference>
<dbReference type="IntAct" id="Q9ZUH0">
    <property type="interactions" value="5"/>
</dbReference>
<dbReference type="STRING" id="3702.Q9ZUH0"/>
<dbReference type="PaxDb" id="3702-AT2G24250.2"/>
<dbReference type="ProteomicsDB" id="222430"/>
<dbReference type="EnsemblPlants" id="AT2G24250.1">
    <property type="protein sequence ID" value="AT2G24250.1"/>
    <property type="gene ID" value="AT2G24250"/>
</dbReference>
<dbReference type="EnsemblPlants" id="AT2G24250.2">
    <property type="protein sequence ID" value="AT2G24250.2"/>
    <property type="gene ID" value="AT2G24250"/>
</dbReference>
<dbReference type="GeneID" id="816959"/>
<dbReference type="Gramene" id="AT2G24250.1">
    <property type="protein sequence ID" value="AT2G24250.1"/>
    <property type="gene ID" value="AT2G24250"/>
</dbReference>
<dbReference type="Gramene" id="AT2G24250.2">
    <property type="protein sequence ID" value="AT2G24250.2"/>
    <property type="gene ID" value="AT2G24250"/>
</dbReference>
<dbReference type="KEGG" id="ath:AT2G24250"/>
<dbReference type="Araport" id="AT2G24250"/>
<dbReference type="TAIR" id="AT2G24250">
    <property type="gene designation" value="ATFDA14"/>
</dbReference>
<dbReference type="HOGENOM" id="CLU_019286_10_0_1"/>
<dbReference type="InParanoid" id="Q9ZUH0"/>
<dbReference type="OMA" id="PYKYGVH"/>
<dbReference type="PhylomeDB" id="Q9ZUH0"/>
<dbReference type="PRO" id="PR:Q9ZUH0"/>
<dbReference type="Proteomes" id="UP000006548">
    <property type="component" value="Chromosome 2"/>
</dbReference>
<dbReference type="ExpressionAtlas" id="Q9ZUH0">
    <property type="expression patterns" value="baseline and differential"/>
</dbReference>
<dbReference type="Gene3D" id="1.20.1280.50">
    <property type="match status" value="1"/>
</dbReference>
<dbReference type="InterPro" id="IPR036047">
    <property type="entry name" value="F-box-like_dom_sf"/>
</dbReference>
<dbReference type="InterPro" id="IPR001810">
    <property type="entry name" value="F-box_dom"/>
</dbReference>
<dbReference type="InterPro" id="IPR005174">
    <property type="entry name" value="KIB1-4_b-propeller"/>
</dbReference>
<dbReference type="InterPro" id="IPR051304">
    <property type="entry name" value="SCF_F-box_domain"/>
</dbReference>
<dbReference type="PANTHER" id="PTHR47123">
    <property type="entry name" value="F-BOX PROTEIN SKIP23"/>
    <property type="match status" value="1"/>
</dbReference>
<dbReference type="PANTHER" id="PTHR47123:SF24">
    <property type="entry name" value="LOW PROTEIN: F-BOX_KELCH-REPEAT PROTEIN"/>
    <property type="match status" value="1"/>
</dbReference>
<dbReference type="Pfam" id="PF03478">
    <property type="entry name" value="Beta-prop_KIB1-4"/>
    <property type="match status" value="1"/>
</dbReference>
<dbReference type="Pfam" id="PF00646">
    <property type="entry name" value="F-box"/>
    <property type="match status" value="1"/>
</dbReference>
<dbReference type="SUPFAM" id="SSF81383">
    <property type="entry name" value="F-box domain"/>
    <property type="match status" value="1"/>
</dbReference>
<name>FBK35_ARATH</name>
<protein>
    <recommendedName>
        <fullName>F-box/kelch-repeat protein At2g24250</fullName>
    </recommendedName>
</protein>
<sequence>MAMKKKISTSSIMPDWSQLPEELLHIISTHLEDHYFDAVHARSVCRSWRSTFPFPSSLLRQSYSLPAFPLESKDLCCTLEKVPLFLFRVLTPPDAADASSEYFLGGLGQDKSNDHVELPSPLQCSVKVNVPGTEPILMNMLDCQIIPLGHKYRLMIGCNPEEYSAAFLPLNEQGGGGEFVALLDCTDLFLVLRSTEMRWIRLEKPSTASCKELFTFRGRFYATFFNGDTFVIDPSSLEATPLTPHIDSNFLVPSGNEELFLVKTDFLRCRVSRLDEEAAEWVEVSDLGDRVLFLGGHLGNFYCSAKELPHGCGLTGDSILFTVGSRNVTYPYKYGVHTNKRKAEDNINCWRSSRENRVLFRNRYDPVLSFRVER</sequence>
<accession>Q9ZUH0</accession>
<accession>Q94C28</accession>
<reference key="1">
    <citation type="journal article" date="1999" name="Nature">
        <title>Sequence and analysis of chromosome 2 of the plant Arabidopsis thaliana.</title>
        <authorList>
            <person name="Lin X."/>
            <person name="Kaul S."/>
            <person name="Rounsley S.D."/>
            <person name="Shea T.P."/>
            <person name="Benito M.-I."/>
            <person name="Town C.D."/>
            <person name="Fujii C.Y."/>
            <person name="Mason T.M."/>
            <person name="Bowman C.L."/>
            <person name="Barnstead M.E."/>
            <person name="Feldblyum T.V."/>
            <person name="Buell C.R."/>
            <person name="Ketchum K.A."/>
            <person name="Lee J.J."/>
            <person name="Ronning C.M."/>
            <person name="Koo H.L."/>
            <person name="Moffat K.S."/>
            <person name="Cronin L.A."/>
            <person name="Shen M."/>
            <person name="Pai G."/>
            <person name="Van Aken S."/>
            <person name="Umayam L."/>
            <person name="Tallon L.J."/>
            <person name="Gill J.E."/>
            <person name="Adams M.D."/>
            <person name="Carrera A.J."/>
            <person name="Creasy T.H."/>
            <person name="Goodman H.M."/>
            <person name="Somerville C.R."/>
            <person name="Copenhaver G.P."/>
            <person name="Preuss D."/>
            <person name="Nierman W.C."/>
            <person name="White O."/>
            <person name="Eisen J.A."/>
            <person name="Salzberg S.L."/>
            <person name="Fraser C.M."/>
            <person name="Venter J.C."/>
        </authorList>
    </citation>
    <scope>NUCLEOTIDE SEQUENCE [LARGE SCALE GENOMIC DNA]</scope>
    <source>
        <strain>cv. Columbia</strain>
    </source>
</reference>
<reference key="2">
    <citation type="journal article" date="2017" name="Plant J.">
        <title>Araport11: a complete reannotation of the Arabidopsis thaliana reference genome.</title>
        <authorList>
            <person name="Cheng C.Y."/>
            <person name="Krishnakumar V."/>
            <person name="Chan A.P."/>
            <person name="Thibaud-Nissen F."/>
            <person name="Schobel S."/>
            <person name="Town C.D."/>
        </authorList>
    </citation>
    <scope>GENOME REANNOTATION</scope>
    <source>
        <strain>cv. Columbia</strain>
    </source>
</reference>
<reference key="3">
    <citation type="journal article" date="2003" name="Science">
        <title>Empirical analysis of transcriptional activity in the Arabidopsis genome.</title>
        <authorList>
            <person name="Yamada K."/>
            <person name="Lim J."/>
            <person name="Dale J.M."/>
            <person name="Chen H."/>
            <person name="Shinn P."/>
            <person name="Palm C.J."/>
            <person name="Southwick A.M."/>
            <person name="Wu H.C."/>
            <person name="Kim C.J."/>
            <person name="Nguyen M."/>
            <person name="Pham P.K."/>
            <person name="Cheuk R.F."/>
            <person name="Karlin-Newmann G."/>
            <person name="Liu S.X."/>
            <person name="Lam B."/>
            <person name="Sakano H."/>
            <person name="Wu T."/>
            <person name="Yu G."/>
            <person name="Miranda M."/>
            <person name="Quach H.L."/>
            <person name="Tripp M."/>
            <person name="Chang C.H."/>
            <person name="Lee J.M."/>
            <person name="Toriumi M.J."/>
            <person name="Chan M.M."/>
            <person name="Tang C.C."/>
            <person name="Onodera C.S."/>
            <person name="Deng J.M."/>
            <person name="Akiyama K."/>
            <person name="Ansari Y."/>
            <person name="Arakawa T."/>
            <person name="Banh J."/>
            <person name="Banno F."/>
            <person name="Bowser L."/>
            <person name="Brooks S.Y."/>
            <person name="Carninci P."/>
            <person name="Chao Q."/>
            <person name="Choy N."/>
            <person name="Enju A."/>
            <person name="Goldsmith A.D."/>
            <person name="Gurjal M."/>
            <person name="Hansen N.F."/>
            <person name="Hayashizaki Y."/>
            <person name="Johnson-Hopson C."/>
            <person name="Hsuan V.W."/>
            <person name="Iida K."/>
            <person name="Karnes M."/>
            <person name="Khan S."/>
            <person name="Koesema E."/>
            <person name="Ishida J."/>
            <person name="Jiang P.X."/>
            <person name="Jones T."/>
            <person name="Kawai J."/>
            <person name="Kamiya A."/>
            <person name="Meyers C."/>
            <person name="Nakajima M."/>
            <person name="Narusaka M."/>
            <person name="Seki M."/>
            <person name="Sakurai T."/>
            <person name="Satou M."/>
            <person name="Tamse R."/>
            <person name="Vaysberg M."/>
            <person name="Wallender E.K."/>
            <person name="Wong C."/>
            <person name="Yamamura Y."/>
            <person name="Yuan S."/>
            <person name="Shinozaki K."/>
            <person name="Davis R.W."/>
            <person name="Theologis A."/>
            <person name="Ecker J.R."/>
        </authorList>
    </citation>
    <scope>NUCLEOTIDE SEQUENCE [LARGE SCALE MRNA]</scope>
    <source>
        <strain>cv. Columbia</strain>
    </source>
</reference>
<organism>
    <name type="scientific">Arabidopsis thaliana</name>
    <name type="common">Mouse-ear cress</name>
    <dbReference type="NCBI Taxonomy" id="3702"/>
    <lineage>
        <taxon>Eukaryota</taxon>
        <taxon>Viridiplantae</taxon>
        <taxon>Streptophyta</taxon>
        <taxon>Embryophyta</taxon>
        <taxon>Tracheophyta</taxon>
        <taxon>Spermatophyta</taxon>
        <taxon>Magnoliopsida</taxon>
        <taxon>eudicotyledons</taxon>
        <taxon>Gunneridae</taxon>
        <taxon>Pentapetalae</taxon>
        <taxon>rosids</taxon>
        <taxon>malvids</taxon>
        <taxon>Brassicales</taxon>
        <taxon>Brassicaceae</taxon>
        <taxon>Camelineae</taxon>
        <taxon>Arabidopsis</taxon>
    </lineage>
</organism>